<name>PGK_PSEU2</name>
<evidence type="ECO:0000255" key="1">
    <source>
        <dbReference type="HAMAP-Rule" id="MF_00145"/>
    </source>
</evidence>
<reference key="1">
    <citation type="journal article" date="2005" name="Proc. Natl. Acad. Sci. U.S.A.">
        <title>Comparison of the complete genome sequences of Pseudomonas syringae pv. syringae B728a and pv. tomato DC3000.</title>
        <authorList>
            <person name="Feil H."/>
            <person name="Feil W.S."/>
            <person name="Chain P."/>
            <person name="Larimer F."/>
            <person name="Dibartolo G."/>
            <person name="Copeland A."/>
            <person name="Lykidis A."/>
            <person name="Trong S."/>
            <person name="Nolan M."/>
            <person name="Goltsman E."/>
            <person name="Thiel J."/>
            <person name="Malfatti S."/>
            <person name="Loper J.E."/>
            <person name="Lapidus A."/>
            <person name="Detter J.C."/>
            <person name="Land M."/>
            <person name="Richardson P.M."/>
            <person name="Kyrpides N.C."/>
            <person name="Ivanova N."/>
            <person name="Lindow S.E."/>
        </authorList>
    </citation>
    <scope>NUCLEOTIDE SEQUENCE [LARGE SCALE GENOMIC DNA]</scope>
    <source>
        <strain>B728a</strain>
    </source>
</reference>
<organism>
    <name type="scientific">Pseudomonas syringae pv. syringae (strain B728a)</name>
    <dbReference type="NCBI Taxonomy" id="205918"/>
    <lineage>
        <taxon>Bacteria</taxon>
        <taxon>Pseudomonadati</taxon>
        <taxon>Pseudomonadota</taxon>
        <taxon>Gammaproteobacteria</taxon>
        <taxon>Pseudomonadales</taxon>
        <taxon>Pseudomonadaceae</taxon>
        <taxon>Pseudomonas</taxon>
        <taxon>Pseudomonas syringae</taxon>
    </lineage>
</organism>
<accession>Q4ZM05</accession>
<comment type="catalytic activity">
    <reaction evidence="1">
        <text>(2R)-3-phosphoglycerate + ATP = (2R)-3-phospho-glyceroyl phosphate + ADP</text>
        <dbReference type="Rhea" id="RHEA:14801"/>
        <dbReference type="ChEBI" id="CHEBI:30616"/>
        <dbReference type="ChEBI" id="CHEBI:57604"/>
        <dbReference type="ChEBI" id="CHEBI:58272"/>
        <dbReference type="ChEBI" id="CHEBI:456216"/>
        <dbReference type="EC" id="2.7.2.3"/>
    </reaction>
</comment>
<comment type="pathway">
    <text evidence="1">Carbohydrate degradation; glycolysis; pyruvate from D-glyceraldehyde 3-phosphate: step 2/5.</text>
</comment>
<comment type="subunit">
    <text evidence="1">Monomer.</text>
</comment>
<comment type="subcellular location">
    <subcellularLocation>
        <location evidence="1">Cytoplasm</location>
    </subcellularLocation>
</comment>
<comment type="similarity">
    <text evidence="1">Belongs to the phosphoglycerate kinase family.</text>
</comment>
<sequence length="387" mass="40220">MTVLKMTDLDLQGKRVLIREDLNVPVKDGVVSSDARILASLPTIRLALEKGAAVMVCSHLGRPTEGEFSAENSLKPVADYLSKALGRDVPLVADYLDGVDVKAGEVVLFENVRFNKGEKKNADELAQQYAALCDVFVMDAFGTAHRAEGSTHGVAKFAKVAAAGPLLAAELEALGKALGAPAQPMTAIVAGSKVSTKLDVLNSLSGICNQLIVGGGIANTFLAAAGHKVGKSLYEPDLLDTARAIAAKVSVPLPTDVVVAKEFAESAAATVKLIADVADDDMILDIGPQTAAHFAELLKSSGTILWNGPVGVFEFDQFGEGTKTLAKAIAESQAFSIAGGGDTLAAIDKYGVAQQISYISTGGGAFLEFVEGKVLPAVEVLEQRAKA</sequence>
<dbReference type="EC" id="2.7.2.3" evidence="1"/>
<dbReference type="EMBL" id="CP000075">
    <property type="protein sequence ID" value="AAY39817.1"/>
    <property type="molecule type" value="Genomic_DNA"/>
</dbReference>
<dbReference type="RefSeq" id="WP_011269229.1">
    <property type="nucleotide sequence ID" value="NC_007005.1"/>
</dbReference>
<dbReference type="RefSeq" id="YP_237855.1">
    <property type="nucleotide sequence ID" value="NC_007005.1"/>
</dbReference>
<dbReference type="SMR" id="Q4ZM05"/>
<dbReference type="STRING" id="205918.Psyr_4790"/>
<dbReference type="KEGG" id="psb:Psyr_4790"/>
<dbReference type="PATRIC" id="fig|205918.7.peg.4946"/>
<dbReference type="eggNOG" id="COG0126">
    <property type="taxonomic scope" value="Bacteria"/>
</dbReference>
<dbReference type="HOGENOM" id="CLU_025427_0_2_6"/>
<dbReference type="OrthoDB" id="9808460at2"/>
<dbReference type="UniPathway" id="UPA00109">
    <property type="reaction ID" value="UER00185"/>
</dbReference>
<dbReference type="Proteomes" id="UP000000426">
    <property type="component" value="Chromosome"/>
</dbReference>
<dbReference type="GO" id="GO:0005829">
    <property type="term" value="C:cytosol"/>
    <property type="evidence" value="ECO:0007669"/>
    <property type="project" value="TreeGrafter"/>
</dbReference>
<dbReference type="GO" id="GO:0043531">
    <property type="term" value="F:ADP binding"/>
    <property type="evidence" value="ECO:0007669"/>
    <property type="project" value="TreeGrafter"/>
</dbReference>
<dbReference type="GO" id="GO:0005524">
    <property type="term" value="F:ATP binding"/>
    <property type="evidence" value="ECO:0007669"/>
    <property type="project" value="UniProtKB-KW"/>
</dbReference>
<dbReference type="GO" id="GO:0004618">
    <property type="term" value="F:phosphoglycerate kinase activity"/>
    <property type="evidence" value="ECO:0007669"/>
    <property type="project" value="UniProtKB-UniRule"/>
</dbReference>
<dbReference type="GO" id="GO:0006094">
    <property type="term" value="P:gluconeogenesis"/>
    <property type="evidence" value="ECO:0007669"/>
    <property type="project" value="TreeGrafter"/>
</dbReference>
<dbReference type="GO" id="GO:0006096">
    <property type="term" value="P:glycolytic process"/>
    <property type="evidence" value="ECO:0007669"/>
    <property type="project" value="UniProtKB-UniRule"/>
</dbReference>
<dbReference type="FunFam" id="3.40.50.1260:FF:000001">
    <property type="entry name" value="Phosphoglycerate kinase"/>
    <property type="match status" value="1"/>
</dbReference>
<dbReference type="FunFam" id="3.40.50.1260:FF:000002">
    <property type="entry name" value="Phosphoglycerate kinase"/>
    <property type="match status" value="1"/>
</dbReference>
<dbReference type="Gene3D" id="3.40.50.1260">
    <property type="entry name" value="Phosphoglycerate kinase, N-terminal domain"/>
    <property type="match status" value="2"/>
</dbReference>
<dbReference type="HAMAP" id="MF_00145">
    <property type="entry name" value="Phosphoglyc_kinase"/>
    <property type="match status" value="1"/>
</dbReference>
<dbReference type="InterPro" id="IPR001576">
    <property type="entry name" value="Phosphoglycerate_kinase"/>
</dbReference>
<dbReference type="InterPro" id="IPR015911">
    <property type="entry name" value="Phosphoglycerate_kinase_CS"/>
</dbReference>
<dbReference type="InterPro" id="IPR015824">
    <property type="entry name" value="Phosphoglycerate_kinase_N"/>
</dbReference>
<dbReference type="InterPro" id="IPR036043">
    <property type="entry name" value="Phosphoglycerate_kinase_sf"/>
</dbReference>
<dbReference type="PANTHER" id="PTHR11406">
    <property type="entry name" value="PHOSPHOGLYCERATE KINASE"/>
    <property type="match status" value="1"/>
</dbReference>
<dbReference type="PANTHER" id="PTHR11406:SF23">
    <property type="entry name" value="PHOSPHOGLYCERATE KINASE 1, CHLOROPLASTIC-RELATED"/>
    <property type="match status" value="1"/>
</dbReference>
<dbReference type="Pfam" id="PF00162">
    <property type="entry name" value="PGK"/>
    <property type="match status" value="1"/>
</dbReference>
<dbReference type="PIRSF" id="PIRSF000724">
    <property type="entry name" value="Pgk"/>
    <property type="match status" value="1"/>
</dbReference>
<dbReference type="PRINTS" id="PR00477">
    <property type="entry name" value="PHGLYCKINASE"/>
</dbReference>
<dbReference type="SUPFAM" id="SSF53748">
    <property type="entry name" value="Phosphoglycerate kinase"/>
    <property type="match status" value="1"/>
</dbReference>
<dbReference type="PROSITE" id="PS00111">
    <property type="entry name" value="PGLYCERATE_KINASE"/>
    <property type="match status" value="1"/>
</dbReference>
<protein>
    <recommendedName>
        <fullName evidence="1">Phosphoglycerate kinase</fullName>
        <ecNumber evidence="1">2.7.2.3</ecNumber>
    </recommendedName>
</protein>
<gene>
    <name evidence="1" type="primary">pgk</name>
    <name type="ordered locus">Psyr_4790</name>
</gene>
<proteinExistence type="inferred from homology"/>
<keyword id="KW-0067">ATP-binding</keyword>
<keyword id="KW-0963">Cytoplasm</keyword>
<keyword id="KW-0324">Glycolysis</keyword>
<keyword id="KW-0418">Kinase</keyword>
<keyword id="KW-0547">Nucleotide-binding</keyword>
<keyword id="KW-0808">Transferase</keyword>
<feature type="chain" id="PRO_1000058043" description="Phosphoglycerate kinase">
    <location>
        <begin position="1"/>
        <end position="387"/>
    </location>
</feature>
<feature type="binding site" evidence="1">
    <location>
        <begin position="21"/>
        <end position="23"/>
    </location>
    <ligand>
        <name>substrate</name>
    </ligand>
</feature>
<feature type="binding site" evidence="1">
    <location>
        <position position="36"/>
    </location>
    <ligand>
        <name>substrate</name>
    </ligand>
</feature>
<feature type="binding site" evidence="1">
    <location>
        <begin position="59"/>
        <end position="62"/>
    </location>
    <ligand>
        <name>substrate</name>
    </ligand>
</feature>
<feature type="binding site" evidence="1">
    <location>
        <position position="113"/>
    </location>
    <ligand>
        <name>substrate</name>
    </ligand>
</feature>
<feature type="binding site" evidence="1">
    <location>
        <position position="146"/>
    </location>
    <ligand>
        <name>substrate</name>
    </ligand>
</feature>
<feature type="binding site" evidence="1">
    <location>
        <position position="197"/>
    </location>
    <ligand>
        <name>ATP</name>
        <dbReference type="ChEBI" id="CHEBI:30616"/>
    </ligand>
</feature>
<feature type="binding site" evidence="1">
    <location>
        <position position="314"/>
    </location>
    <ligand>
        <name>ATP</name>
        <dbReference type="ChEBI" id="CHEBI:30616"/>
    </ligand>
</feature>
<feature type="binding site" evidence="1">
    <location>
        <begin position="340"/>
        <end position="343"/>
    </location>
    <ligand>
        <name>ATP</name>
        <dbReference type="ChEBI" id="CHEBI:30616"/>
    </ligand>
</feature>